<name>DEF1_NOSS1</name>
<feature type="chain" id="PRO_0000082730" description="Peptide deformylase 1">
    <location>
        <begin position="1"/>
        <end position="187"/>
    </location>
</feature>
<feature type="active site" evidence="1">
    <location>
        <position position="150"/>
    </location>
</feature>
<feature type="binding site" evidence="1">
    <location>
        <position position="107"/>
    </location>
    <ligand>
        <name>Fe cation</name>
        <dbReference type="ChEBI" id="CHEBI:24875"/>
    </ligand>
</feature>
<feature type="binding site" evidence="1">
    <location>
        <position position="149"/>
    </location>
    <ligand>
        <name>Fe cation</name>
        <dbReference type="ChEBI" id="CHEBI:24875"/>
    </ligand>
</feature>
<feature type="binding site" evidence="1">
    <location>
        <position position="153"/>
    </location>
    <ligand>
        <name>Fe cation</name>
        <dbReference type="ChEBI" id="CHEBI:24875"/>
    </ligand>
</feature>
<sequence>MPSEIAVEKKKLKNPPLQLHYLGDRVLRQPAKRITKVDDETRQLIRDMLQTMYSSDGIGLAAPQVGINKQLIVIDCEPDNPANPPLILINPTIKQVSREICSAQEGCLSIPGVYMDVKRPEVVEVAYKDENGRPQTLKATDLLGRCIQHEMDHLNGVVFVDRVDNSLTLAQELSKNGFSYQAVKPVA</sequence>
<comment type="function">
    <text evidence="1">Removes the formyl group from the N-terminal Met of newly synthesized proteins. Requires at least a dipeptide for an efficient rate of reaction. N-terminal L-methionine is a prerequisite for activity but the enzyme has broad specificity at other positions.</text>
</comment>
<comment type="catalytic activity">
    <reaction evidence="1">
        <text>N-terminal N-formyl-L-methionyl-[peptide] + H2O = N-terminal L-methionyl-[peptide] + formate</text>
        <dbReference type="Rhea" id="RHEA:24420"/>
        <dbReference type="Rhea" id="RHEA-COMP:10639"/>
        <dbReference type="Rhea" id="RHEA-COMP:10640"/>
        <dbReference type="ChEBI" id="CHEBI:15377"/>
        <dbReference type="ChEBI" id="CHEBI:15740"/>
        <dbReference type="ChEBI" id="CHEBI:49298"/>
        <dbReference type="ChEBI" id="CHEBI:64731"/>
        <dbReference type="EC" id="3.5.1.88"/>
    </reaction>
</comment>
<comment type="cofactor">
    <cofactor evidence="1">
        <name>Fe(2+)</name>
        <dbReference type="ChEBI" id="CHEBI:29033"/>
    </cofactor>
    <text evidence="1">Binds 1 Fe(2+) ion.</text>
</comment>
<comment type="similarity">
    <text evidence="1">Belongs to the polypeptide deformylase family.</text>
</comment>
<dbReference type="EC" id="3.5.1.88" evidence="1"/>
<dbReference type="EMBL" id="BA000019">
    <property type="protein sequence ID" value="BAB74778.1"/>
    <property type="molecule type" value="Genomic_DNA"/>
</dbReference>
<dbReference type="PIR" id="AH2190">
    <property type="entry name" value="AH2190"/>
</dbReference>
<dbReference type="SMR" id="Q8YSK6"/>
<dbReference type="STRING" id="103690.gene:10495115"/>
<dbReference type="KEGG" id="ana:alr3079"/>
<dbReference type="eggNOG" id="COG0242">
    <property type="taxonomic scope" value="Bacteria"/>
</dbReference>
<dbReference type="OrthoDB" id="9784988at2"/>
<dbReference type="Proteomes" id="UP000002483">
    <property type="component" value="Chromosome"/>
</dbReference>
<dbReference type="GO" id="GO:0046872">
    <property type="term" value="F:metal ion binding"/>
    <property type="evidence" value="ECO:0007669"/>
    <property type="project" value="UniProtKB-KW"/>
</dbReference>
<dbReference type="GO" id="GO:0042586">
    <property type="term" value="F:peptide deformylase activity"/>
    <property type="evidence" value="ECO:0007669"/>
    <property type="project" value="UniProtKB-UniRule"/>
</dbReference>
<dbReference type="GO" id="GO:0043686">
    <property type="term" value="P:co-translational protein modification"/>
    <property type="evidence" value="ECO:0007669"/>
    <property type="project" value="TreeGrafter"/>
</dbReference>
<dbReference type="GO" id="GO:0006412">
    <property type="term" value="P:translation"/>
    <property type="evidence" value="ECO:0007669"/>
    <property type="project" value="UniProtKB-UniRule"/>
</dbReference>
<dbReference type="CDD" id="cd00487">
    <property type="entry name" value="Pep_deformylase"/>
    <property type="match status" value="1"/>
</dbReference>
<dbReference type="FunFam" id="3.90.45.10:FF:000005">
    <property type="entry name" value="Peptide deformylase"/>
    <property type="match status" value="1"/>
</dbReference>
<dbReference type="Gene3D" id="3.90.45.10">
    <property type="entry name" value="Peptide deformylase"/>
    <property type="match status" value="1"/>
</dbReference>
<dbReference type="HAMAP" id="MF_00163">
    <property type="entry name" value="Pep_deformylase"/>
    <property type="match status" value="1"/>
</dbReference>
<dbReference type="InterPro" id="IPR023635">
    <property type="entry name" value="Peptide_deformylase"/>
</dbReference>
<dbReference type="InterPro" id="IPR036821">
    <property type="entry name" value="Peptide_deformylase_sf"/>
</dbReference>
<dbReference type="NCBIfam" id="TIGR00079">
    <property type="entry name" value="pept_deformyl"/>
    <property type="match status" value="1"/>
</dbReference>
<dbReference type="NCBIfam" id="NF001159">
    <property type="entry name" value="PRK00150.1-3"/>
    <property type="match status" value="1"/>
</dbReference>
<dbReference type="PANTHER" id="PTHR10458">
    <property type="entry name" value="PEPTIDE DEFORMYLASE"/>
    <property type="match status" value="1"/>
</dbReference>
<dbReference type="PANTHER" id="PTHR10458:SF22">
    <property type="entry name" value="PEPTIDE DEFORMYLASE"/>
    <property type="match status" value="1"/>
</dbReference>
<dbReference type="Pfam" id="PF01327">
    <property type="entry name" value="Pep_deformylase"/>
    <property type="match status" value="1"/>
</dbReference>
<dbReference type="PIRSF" id="PIRSF004749">
    <property type="entry name" value="Pep_def"/>
    <property type="match status" value="1"/>
</dbReference>
<dbReference type="PRINTS" id="PR01576">
    <property type="entry name" value="PDEFORMYLASE"/>
</dbReference>
<dbReference type="SUPFAM" id="SSF56420">
    <property type="entry name" value="Peptide deformylase"/>
    <property type="match status" value="1"/>
</dbReference>
<reference key="1">
    <citation type="journal article" date="2001" name="DNA Res.">
        <title>Complete genomic sequence of the filamentous nitrogen-fixing cyanobacterium Anabaena sp. strain PCC 7120.</title>
        <authorList>
            <person name="Kaneko T."/>
            <person name="Nakamura Y."/>
            <person name="Wolk C.P."/>
            <person name="Kuritz T."/>
            <person name="Sasamoto S."/>
            <person name="Watanabe A."/>
            <person name="Iriguchi M."/>
            <person name="Ishikawa A."/>
            <person name="Kawashima K."/>
            <person name="Kimura T."/>
            <person name="Kishida Y."/>
            <person name="Kohara M."/>
            <person name="Matsumoto M."/>
            <person name="Matsuno A."/>
            <person name="Muraki A."/>
            <person name="Nakazaki N."/>
            <person name="Shimpo S."/>
            <person name="Sugimoto M."/>
            <person name="Takazawa M."/>
            <person name="Yamada M."/>
            <person name="Yasuda M."/>
            <person name="Tabata S."/>
        </authorList>
    </citation>
    <scope>NUCLEOTIDE SEQUENCE [LARGE SCALE GENOMIC DNA]</scope>
    <source>
        <strain>PCC 7120 / SAG 25.82 / UTEX 2576</strain>
    </source>
</reference>
<gene>
    <name evidence="1" type="primary">def1</name>
    <name type="ordered locus">alr3079</name>
</gene>
<evidence type="ECO:0000255" key="1">
    <source>
        <dbReference type="HAMAP-Rule" id="MF_00163"/>
    </source>
</evidence>
<protein>
    <recommendedName>
        <fullName evidence="1">Peptide deformylase 1</fullName>
        <shortName evidence="1">PDF 1</shortName>
        <ecNumber evidence="1">3.5.1.88</ecNumber>
    </recommendedName>
    <alternativeName>
        <fullName evidence="1">Polypeptide deformylase 1</fullName>
    </alternativeName>
</protein>
<proteinExistence type="inferred from homology"/>
<organism>
    <name type="scientific">Nostoc sp. (strain PCC 7120 / SAG 25.82 / UTEX 2576)</name>
    <dbReference type="NCBI Taxonomy" id="103690"/>
    <lineage>
        <taxon>Bacteria</taxon>
        <taxon>Bacillati</taxon>
        <taxon>Cyanobacteriota</taxon>
        <taxon>Cyanophyceae</taxon>
        <taxon>Nostocales</taxon>
        <taxon>Nostocaceae</taxon>
        <taxon>Nostoc</taxon>
    </lineage>
</organism>
<keyword id="KW-0378">Hydrolase</keyword>
<keyword id="KW-0408">Iron</keyword>
<keyword id="KW-0479">Metal-binding</keyword>
<keyword id="KW-0648">Protein biosynthesis</keyword>
<keyword id="KW-1185">Reference proteome</keyword>
<accession>Q8YSK6</accession>